<proteinExistence type="inferred from homology"/>
<gene>
    <name evidence="1" type="primary">mnmC</name>
    <name type="ordered locus">YPK_1519</name>
</gene>
<reference key="1">
    <citation type="submission" date="2008-02" db="EMBL/GenBank/DDBJ databases">
        <title>Complete sequence of Yersinia pseudotuberculosis YPIII.</title>
        <authorList>
            <consortium name="US DOE Joint Genome Institute"/>
            <person name="Copeland A."/>
            <person name="Lucas S."/>
            <person name="Lapidus A."/>
            <person name="Glavina del Rio T."/>
            <person name="Dalin E."/>
            <person name="Tice H."/>
            <person name="Bruce D."/>
            <person name="Goodwin L."/>
            <person name="Pitluck S."/>
            <person name="Munk A.C."/>
            <person name="Brettin T."/>
            <person name="Detter J.C."/>
            <person name="Han C."/>
            <person name="Tapia R."/>
            <person name="Schmutz J."/>
            <person name="Larimer F."/>
            <person name="Land M."/>
            <person name="Hauser L."/>
            <person name="Challacombe J.F."/>
            <person name="Green L."/>
            <person name="Lindler L.E."/>
            <person name="Nikolich M.P."/>
            <person name="Richardson P."/>
        </authorList>
    </citation>
    <scope>NUCLEOTIDE SEQUENCE [LARGE SCALE GENOMIC DNA]</scope>
    <source>
        <strain>YPIII</strain>
    </source>
</reference>
<protein>
    <recommendedName>
        <fullName evidence="1">tRNA 5-methylaminomethyl-2-thiouridine biosynthesis bifunctional protein MnmC</fullName>
        <shortName evidence="1">tRNA mnm(5)s(2)U biosynthesis bifunctional protein</shortName>
    </recommendedName>
    <domain>
        <recommendedName>
            <fullName evidence="1">tRNA (mnm(5)s(2)U34)-methyltransferase</fullName>
            <ecNumber evidence="1">2.1.1.61</ecNumber>
        </recommendedName>
    </domain>
    <domain>
        <recommendedName>
            <fullName evidence="1">FAD-dependent cmnm(5)s(2)U34 oxidoreductase</fullName>
            <ecNumber evidence="1">1.5.-.-</ecNumber>
        </recommendedName>
    </domain>
</protein>
<evidence type="ECO:0000255" key="1">
    <source>
        <dbReference type="HAMAP-Rule" id="MF_01102"/>
    </source>
</evidence>
<keyword id="KW-0963">Cytoplasm</keyword>
<keyword id="KW-0274">FAD</keyword>
<keyword id="KW-0285">Flavoprotein</keyword>
<keyword id="KW-0489">Methyltransferase</keyword>
<keyword id="KW-0511">Multifunctional enzyme</keyword>
<keyword id="KW-0560">Oxidoreductase</keyword>
<keyword id="KW-0949">S-adenosyl-L-methionine</keyword>
<keyword id="KW-0808">Transferase</keyword>
<keyword id="KW-0819">tRNA processing</keyword>
<accession>B1JGH2</accession>
<organism>
    <name type="scientific">Yersinia pseudotuberculosis serotype O:3 (strain YPIII)</name>
    <dbReference type="NCBI Taxonomy" id="502800"/>
    <lineage>
        <taxon>Bacteria</taxon>
        <taxon>Pseudomonadati</taxon>
        <taxon>Pseudomonadota</taxon>
        <taxon>Gammaproteobacteria</taxon>
        <taxon>Enterobacterales</taxon>
        <taxon>Yersiniaceae</taxon>
        <taxon>Yersinia</taxon>
    </lineage>
</organism>
<name>MNMC_YERPY</name>
<comment type="function">
    <text evidence="1">Catalyzes the last two steps in the biosynthesis of 5-methylaminomethyl-2-thiouridine (mnm(5)s(2)U) at the wobble position (U34) in tRNA. Catalyzes the FAD-dependent demodification of cmnm(5)s(2)U34 to nm(5)s(2)U34, followed by the transfer of a methyl group from S-adenosyl-L-methionine to nm(5)s(2)U34, to form mnm(5)s(2)U34.</text>
</comment>
<comment type="catalytic activity">
    <reaction evidence="1">
        <text>5-aminomethyl-2-thiouridine(34) in tRNA + S-adenosyl-L-methionine = 5-methylaminomethyl-2-thiouridine(34) in tRNA + S-adenosyl-L-homocysteine + H(+)</text>
        <dbReference type="Rhea" id="RHEA:19569"/>
        <dbReference type="Rhea" id="RHEA-COMP:10195"/>
        <dbReference type="Rhea" id="RHEA-COMP:10197"/>
        <dbReference type="ChEBI" id="CHEBI:15378"/>
        <dbReference type="ChEBI" id="CHEBI:57856"/>
        <dbReference type="ChEBI" id="CHEBI:59789"/>
        <dbReference type="ChEBI" id="CHEBI:74454"/>
        <dbReference type="ChEBI" id="CHEBI:74455"/>
        <dbReference type="EC" id="2.1.1.61"/>
    </reaction>
</comment>
<comment type="cofactor">
    <cofactor evidence="1">
        <name>FAD</name>
        <dbReference type="ChEBI" id="CHEBI:57692"/>
    </cofactor>
</comment>
<comment type="subcellular location">
    <subcellularLocation>
        <location evidence="1">Cytoplasm</location>
    </subcellularLocation>
</comment>
<comment type="similarity">
    <text evidence="1">In the N-terminal section; belongs to the methyltransferase superfamily. tRNA (mnm(5)s(2)U34)-methyltransferase family.</text>
</comment>
<comment type="similarity">
    <text evidence="1">In the C-terminal section; belongs to the DAO family.</text>
</comment>
<dbReference type="EC" id="2.1.1.61" evidence="1"/>
<dbReference type="EC" id="1.5.-.-" evidence="1"/>
<dbReference type="EMBL" id="CP000950">
    <property type="protein sequence ID" value="ACA67812.1"/>
    <property type="molecule type" value="Genomic_DNA"/>
</dbReference>
<dbReference type="RefSeq" id="WP_002209716.1">
    <property type="nucleotide sequence ID" value="NZ_CP009792.1"/>
</dbReference>
<dbReference type="SMR" id="B1JGH2"/>
<dbReference type="GeneID" id="57975933"/>
<dbReference type="KEGG" id="ypy:YPK_1519"/>
<dbReference type="PATRIC" id="fig|502800.11.peg.2159"/>
<dbReference type="GO" id="GO:0005737">
    <property type="term" value="C:cytoplasm"/>
    <property type="evidence" value="ECO:0007669"/>
    <property type="project" value="UniProtKB-SubCell"/>
</dbReference>
<dbReference type="GO" id="GO:0050660">
    <property type="term" value="F:flavin adenine dinucleotide binding"/>
    <property type="evidence" value="ECO:0007669"/>
    <property type="project" value="UniProtKB-UniRule"/>
</dbReference>
<dbReference type="GO" id="GO:0016645">
    <property type="term" value="F:oxidoreductase activity, acting on the CH-NH group of donors"/>
    <property type="evidence" value="ECO:0007669"/>
    <property type="project" value="InterPro"/>
</dbReference>
<dbReference type="GO" id="GO:0004808">
    <property type="term" value="F:tRNA (5-methylaminomethyl-2-thiouridylate)(34)-methyltransferase activity"/>
    <property type="evidence" value="ECO:0007669"/>
    <property type="project" value="UniProtKB-EC"/>
</dbReference>
<dbReference type="GO" id="GO:0032259">
    <property type="term" value="P:methylation"/>
    <property type="evidence" value="ECO:0007669"/>
    <property type="project" value="UniProtKB-KW"/>
</dbReference>
<dbReference type="GO" id="GO:0002098">
    <property type="term" value="P:tRNA wobble uridine modification"/>
    <property type="evidence" value="ECO:0007669"/>
    <property type="project" value="TreeGrafter"/>
</dbReference>
<dbReference type="FunFam" id="3.40.50.150:FF:000107">
    <property type="entry name" value="tRNA 5-methylaminomethyl-2-thiouridine biosynthesis bifunctional protein MnmC"/>
    <property type="match status" value="1"/>
</dbReference>
<dbReference type="Gene3D" id="3.30.9.10">
    <property type="entry name" value="D-Amino Acid Oxidase, subunit A, domain 2"/>
    <property type="match status" value="1"/>
</dbReference>
<dbReference type="Gene3D" id="3.50.50.60">
    <property type="entry name" value="FAD/NAD(P)-binding domain"/>
    <property type="match status" value="1"/>
</dbReference>
<dbReference type="Gene3D" id="3.40.50.150">
    <property type="entry name" value="Vaccinia Virus protein VP39"/>
    <property type="match status" value="1"/>
</dbReference>
<dbReference type="HAMAP" id="MF_01102">
    <property type="entry name" value="MnmC"/>
    <property type="match status" value="1"/>
</dbReference>
<dbReference type="InterPro" id="IPR006076">
    <property type="entry name" value="FAD-dep_OxRdtase"/>
</dbReference>
<dbReference type="InterPro" id="IPR036188">
    <property type="entry name" value="FAD/NAD-bd_sf"/>
</dbReference>
<dbReference type="InterPro" id="IPR008471">
    <property type="entry name" value="MnmC-like_methylTransf"/>
</dbReference>
<dbReference type="InterPro" id="IPR029063">
    <property type="entry name" value="SAM-dependent_MTases_sf"/>
</dbReference>
<dbReference type="InterPro" id="IPR023032">
    <property type="entry name" value="tRNA_MAMT_biosynth_bifunc_MnmC"/>
</dbReference>
<dbReference type="InterPro" id="IPR047785">
    <property type="entry name" value="tRNA_MNMC2"/>
</dbReference>
<dbReference type="InterPro" id="IPR017610">
    <property type="entry name" value="tRNA_S-uridine_synth_MnmC_C"/>
</dbReference>
<dbReference type="NCBIfam" id="TIGR03197">
    <property type="entry name" value="MnmC_Cterm"/>
    <property type="match status" value="1"/>
</dbReference>
<dbReference type="NCBIfam" id="NF002481">
    <property type="entry name" value="PRK01747.1-2"/>
    <property type="match status" value="1"/>
</dbReference>
<dbReference type="NCBIfam" id="NF002482">
    <property type="entry name" value="PRK01747.1-3"/>
    <property type="match status" value="1"/>
</dbReference>
<dbReference type="NCBIfam" id="NF002484">
    <property type="entry name" value="PRK01747.1-5"/>
    <property type="match status" value="1"/>
</dbReference>
<dbReference type="NCBIfam" id="NF033855">
    <property type="entry name" value="tRNA_MNMC2"/>
    <property type="match status" value="1"/>
</dbReference>
<dbReference type="PANTHER" id="PTHR13847">
    <property type="entry name" value="SARCOSINE DEHYDROGENASE-RELATED"/>
    <property type="match status" value="1"/>
</dbReference>
<dbReference type="PANTHER" id="PTHR13847:SF283">
    <property type="entry name" value="TRNA 5-METHYLAMINOMETHYL-2-THIOURIDINE BIOSYNTHESIS BIFUNCTIONAL PROTEIN MNMC"/>
    <property type="match status" value="1"/>
</dbReference>
<dbReference type="Pfam" id="PF01266">
    <property type="entry name" value="DAO"/>
    <property type="match status" value="1"/>
</dbReference>
<dbReference type="Pfam" id="PF05430">
    <property type="entry name" value="Methyltransf_30"/>
    <property type="match status" value="1"/>
</dbReference>
<dbReference type="SUPFAM" id="SSF51905">
    <property type="entry name" value="FAD/NAD(P)-binding domain"/>
    <property type="match status" value="1"/>
</dbReference>
<dbReference type="SUPFAM" id="SSF53335">
    <property type="entry name" value="S-adenosyl-L-methionine-dependent methyltransferases"/>
    <property type="match status" value="1"/>
</dbReference>
<sequence length="689" mass="76671">MNQRPIQTATLSWNEQGTPVSEQFGDIYFSNEDGLEETHHVFLKGNGFPARFASHPQQSCIFAETGFGTGLNFLTLWRDFALFRQQSPNATLRRLHYISFEKYPLHVADLASAHARWPELASFAEQLRAQWPLPLAGCHRILLADGAITLDLWFGDVNTLLPTLDDSLNNQVDAWFLDGFAPAKNPDMWNEQLFNAMARMTRPGGTFSTFTAAGFVRRGLQQAGFNVTKVKGFGQKREMLTGTLPQQIHAPTAPWYHRPAATRCDDIAIIGGGIVSALTALALQRRGAVVTLYCADAQPAQGASGNRQGALYPLLNGKNDALETFFTSAFTFARRQYDQLLEQGIAFDHQWCGVSQLAFDDKSRGKIEKMLHTQWPVEFAEAMSREQLSELAGLDCAHDGIHYPAGGWLCPSDLTHALMMLAQQNGMTCHYQHELQRLKRIDSQWQLTFGQSQAAKHHATVILATGHRLPEWEQTHHLPLSAVRGQVSHIPTTPVLSQLQQVLCYDGYLTPVNPANQHHCIGASYQRGDIATDFRLTEQQENRERLLRCLPQVSWPQQVDVSDNQARCGVRCAIRDHLPMVGAVPDYAATLAQYQDLSRRIQHGGESEVNDIAVAPVWPELFMVGGLGSRGLCSAPLVAEILAAQMFGEPLPLDAKTLAALNPNRFWIRKLLKGRPVQTRSPATQESSR</sequence>
<feature type="chain" id="PRO_0000348050" description="tRNA 5-methylaminomethyl-2-thiouridine biosynthesis bifunctional protein MnmC">
    <location>
        <begin position="1"/>
        <end position="689"/>
    </location>
</feature>
<feature type="region of interest" description="tRNA (mnm(5)s(2)U34)-methyltransferase">
    <location>
        <begin position="1"/>
        <end position="245"/>
    </location>
</feature>
<feature type="region of interest" description="FAD-dependent cmnm(5)s(2)U34 oxidoreductase">
    <location>
        <begin position="270"/>
        <end position="689"/>
    </location>
</feature>